<proteinExistence type="evidence at transcript level"/>
<reference key="1">
    <citation type="submission" date="1999-08" db="EMBL/GenBank/DDBJ databases">
        <authorList>
            <person name="Bauer V.W."/>
            <person name="Andrews M.T."/>
        </authorList>
    </citation>
    <scope>NUCLEOTIDE SEQUENCE [MRNA]</scope>
    <source>
        <tissue>White adipose tissue</tissue>
    </source>
</reference>
<keyword id="KW-1003">Cell membrane</keyword>
<keyword id="KW-0153">Cholesterol metabolism</keyword>
<keyword id="KW-0963">Cytoplasm</keyword>
<keyword id="KW-0378">Hydrolase</keyword>
<keyword id="KW-0442">Lipid degradation</keyword>
<keyword id="KW-0551">Lipid droplet</keyword>
<keyword id="KW-0443">Lipid metabolism</keyword>
<keyword id="KW-0472">Membrane</keyword>
<keyword id="KW-0597">Phosphoprotein</keyword>
<keyword id="KW-1185">Reference proteome</keyword>
<keyword id="KW-0753">Steroid metabolism</keyword>
<keyword id="KW-1207">Sterol metabolism</keyword>
<evidence type="ECO:0000250" key="1">
    <source>
        <dbReference type="UniProtKB" id="P15304"/>
    </source>
</evidence>
<evidence type="ECO:0000250" key="2">
    <source>
        <dbReference type="UniProtKB" id="P16386"/>
    </source>
</evidence>
<evidence type="ECO:0000250" key="3">
    <source>
        <dbReference type="UniProtKB" id="P54310"/>
    </source>
</evidence>
<evidence type="ECO:0000250" key="4">
    <source>
        <dbReference type="UniProtKB" id="Q05469"/>
    </source>
</evidence>
<evidence type="ECO:0000250" key="5">
    <source>
        <dbReference type="UniProtKB" id="Q5NUF3"/>
    </source>
</evidence>
<evidence type="ECO:0000255" key="6">
    <source>
        <dbReference type="PROSITE-ProRule" id="PRU10038"/>
    </source>
</evidence>
<evidence type="ECO:0000256" key="7">
    <source>
        <dbReference type="SAM" id="MobiDB-lite"/>
    </source>
</evidence>
<evidence type="ECO:0000305" key="8"/>
<dbReference type="EC" id="3.1.1.79" evidence="1"/>
<dbReference type="EC" id="3.1.1.23" evidence="3"/>
<dbReference type="EMBL" id="AF177401">
    <property type="protein sequence ID" value="AAD51122.1"/>
    <property type="molecule type" value="mRNA"/>
</dbReference>
<dbReference type="RefSeq" id="NP_001269179.1">
    <property type="nucleotide sequence ID" value="NM_001282250.1"/>
</dbReference>
<dbReference type="FunCoup" id="Q9R101">
    <property type="interactions" value="714"/>
</dbReference>
<dbReference type="STRING" id="43179.ENSSTOP00000010392"/>
<dbReference type="ESTHER" id="spetr-hslip">
    <property type="family name" value="Hormone-sensitive_lipase_like"/>
</dbReference>
<dbReference type="MEROPS" id="S09.993"/>
<dbReference type="GeneID" id="101976389"/>
<dbReference type="KEGG" id="iti:101976389"/>
<dbReference type="CTD" id="3991"/>
<dbReference type="eggNOG" id="KOG4388">
    <property type="taxonomic scope" value="Eukaryota"/>
</dbReference>
<dbReference type="InParanoid" id="Q9R101"/>
<dbReference type="OrthoDB" id="408631at2759"/>
<dbReference type="UniPathway" id="UPA00256"/>
<dbReference type="Proteomes" id="UP000005215">
    <property type="component" value="Unassembled WGS sequence"/>
</dbReference>
<dbReference type="GO" id="GO:0005901">
    <property type="term" value="C:caveola"/>
    <property type="evidence" value="ECO:0000250"/>
    <property type="project" value="UniProtKB"/>
</dbReference>
<dbReference type="GO" id="GO:0005737">
    <property type="term" value="C:cytoplasm"/>
    <property type="evidence" value="ECO:0000250"/>
    <property type="project" value="UniProtKB"/>
</dbReference>
<dbReference type="GO" id="GO:0005829">
    <property type="term" value="C:cytosol"/>
    <property type="evidence" value="ECO:0000250"/>
    <property type="project" value="UniProtKB"/>
</dbReference>
<dbReference type="GO" id="GO:0005811">
    <property type="term" value="C:lipid droplet"/>
    <property type="evidence" value="ECO:0000250"/>
    <property type="project" value="UniProtKB"/>
</dbReference>
<dbReference type="GO" id="GO:0016020">
    <property type="term" value="C:membrane"/>
    <property type="evidence" value="ECO:0000250"/>
    <property type="project" value="UniProtKB"/>
</dbReference>
<dbReference type="GO" id="GO:0005739">
    <property type="term" value="C:mitochondrion"/>
    <property type="evidence" value="ECO:0000250"/>
    <property type="project" value="UniProtKB"/>
</dbReference>
<dbReference type="GO" id="GO:0005634">
    <property type="term" value="C:nucleus"/>
    <property type="evidence" value="ECO:0000250"/>
    <property type="project" value="UniProtKB"/>
</dbReference>
<dbReference type="GO" id="GO:0047376">
    <property type="term" value="F:all-trans-retinyl-palmitate hydrolase, all-trans-retinol forming activity"/>
    <property type="evidence" value="ECO:0007669"/>
    <property type="project" value="RHEA"/>
</dbReference>
<dbReference type="GO" id="GO:0120516">
    <property type="term" value="F:diacylglycerol lipase activity"/>
    <property type="evidence" value="ECO:0000250"/>
    <property type="project" value="UniProtKB"/>
</dbReference>
<dbReference type="GO" id="GO:0047372">
    <property type="term" value="F:monoacylglycerol lipase activity"/>
    <property type="evidence" value="ECO:0000250"/>
    <property type="project" value="UniProtKB"/>
</dbReference>
<dbReference type="GO" id="GO:0050253">
    <property type="term" value="F:retinyl-palmitate esterase activity"/>
    <property type="evidence" value="ECO:0000250"/>
    <property type="project" value="UniProtKB"/>
</dbReference>
<dbReference type="GO" id="GO:0042134">
    <property type="term" value="F:rRNA primary transcript binding"/>
    <property type="evidence" value="ECO:0000250"/>
    <property type="project" value="UniProtKB"/>
</dbReference>
<dbReference type="GO" id="GO:0004771">
    <property type="term" value="F:sterol ester esterase activity"/>
    <property type="evidence" value="ECO:0000250"/>
    <property type="project" value="UniProtKB"/>
</dbReference>
<dbReference type="GO" id="GO:0004806">
    <property type="term" value="F:triacylglycerol lipase activity"/>
    <property type="evidence" value="ECO:0000250"/>
    <property type="project" value="UniProtKB"/>
</dbReference>
<dbReference type="GO" id="GO:0008203">
    <property type="term" value="P:cholesterol metabolic process"/>
    <property type="evidence" value="ECO:0007669"/>
    <property type="project" value="UniProtKB-KW"/>
</dbReference>
<dbReference type="GO" id="GO:0046340">
    <property type="term" value="P:diacylglycerol catabolic process"/>
    <property type="evidence" value="ECO:0000250"/>
    <property type="project" value="UniProtKB"/>
</dbReference>
<dbReference type="GO" id="GO:0046485">
    <property type="term" value="P:ether lipid metabolic process"/>
    <property type="evidence" value="ECO:0000250"/>
    <property type="project" value="UniProtKB"/>
</dbReference>
<dbReference type="GO" id="GO:0016042">
    <property type="term" value="P:lipid catabolic process"/>
    <property type="evidence" value="ECO:0000250"/>
    <property type="project" value="UniProtKB"/>
</dbReference>
<dbReference type="GO" id="GO:0006363">
    <property type="term" value="P:termination of RNA polymerase I transcription"/>
    <property type="evidence" value="ECO:0000250"/>
    <property type="project" value="UniProtKB"/>
</dbReference>
<dbReference type="GO" id="GO:0006361">
    <property type="term" value="P:transcription initiation at RNA polymerase I promoter"/>
    <property type="evidence" value="ECO:0000250"/>
    <property type="project" value="UniProtKB"/>
</dbReference>
<dbReference type="GO" id="GO:0019433">
    <property type="term" value="P:triglyceride catabolic process"/>
    <property type="evidence" value="ECO:0007669"/>
    <property type="project" value="UniProtKB-UniPathway"/>
</dbReference>
<dbReference type="FunFam" id="3.40.50.1820:FF:000110">
    <property type="entry name" value="Hormone-sensitive lipase"/>
    <property type="match status" value="1"/>
</dbReference>
<dbReference type="FunFam" id="3.40.50.1820:FF:000199">
    <property type="entry name" value="Hormone-sensitive lipase"/>
    <property type="match status" value="1"/>
</dbReference>
<dbReference type="Gene3D" id="3.40.50.1820">
    <property type="entry name" value="alpha/beta hydrolase"/>
    <property type="match status" value="2"/>
</dbReference>
<dbReference type="InterPro" id="IPR013094">
    <property type="entry name" value="AB_hydrolase_3"/>
</dbReference>
<dbReference type="InterPro" id="IPR029058">
    <property type="entry name" value="AB_hydrolase_fold"/>
</dbReference>
<dbReference type="InterPro" id="IPR010468">
    <property type="entry name" value="HSL_N"/>
</dbReference>
<dbReference type="InterPro" id="IPR002168">
    <property type="entry name" value="Lipase_GDXG_HIS_AS"/>
</dbReference>
<dbReference type="InterPro" id="IPR033140">
    <property type="entry name" value="Lipase_GDXG_put_SER_AS"/>
</dbReference>
<dbReference type="PANTHER" id="PTHR23025:SF3">
    <property type="entry name" value="HORMONE-SENSITIVE LIPASE"/>
    <property type="match status" value="1"/>
</dbReference>
<dbReference type="PANTHER" id="PTHR23025">
    <property type="entry name" value="TRIACYLGLYCEROL LIPASE"/>
    <property type="match status" value="1"/>
</dbReference>
<dbReference type="Pfam" id="PF07859">
    <property type="entry name" value="Abhydrolase_3"/>
    <property type="match status" value="2"/>
</dbReference>
<dbReference type="Pfam" id="PF06350">
    <property type="entry name" value="HSL_N"/>
    <property type="match status" value="1"/>
</dbReference>
<dbReference type="SUPFAM" id="SSF53474">
    <property type="entry name" value="alpha/beta-Hydrolases"/>
    <property type="match status" value="1"/>
</dbReference>
<dbReference type="PROSITE" id="PS01173">
    <property type="entry name" value="LIPASE_GDXG_HIS"/>
    <property type="match status" value="1"/>
</dbReference>
<dbReference type="PROSITE" id="PS01174">
    <property type="entry name" value="LIPASE_GDXG_SER"/>
    <property type="match status" value="1"/>
</dbReference>
<feature type="chain" id="PRO_0000071551" description="Hormone-sensitive lipase">
    <location>
        <begin position="1"/>
        <end position="763"/>
    </location>
</feature>
<feature type="region of interest" description="Disordered" evidence="7">
    <location>
        <begin position="616"/>
        <end position="652"/>
    </location>
</feature>
<feature type="short sequence motif" description="Involved in the stabilization of the negatively charged intermediate by the formation of the oxyanion hole" evidence="5">
    <location>
        <begin position="350"/>
        <end position="352"/>
    </location>
</feature>
<feature type="compositionally biased region" description="Basic and acidic residues" evidence="7">
    <location>
        <begin position="616"/>
        <end position="627"/>
    </location>
</feature>
<feature type="active site" evidence="6">
    <location>
        <position position="424"/>
    </location>
</feature>
<feature type="active site" evidence="5">
    <location>
        <position position="692"/>
    </location>
</feature>
<feature type="active site" evidence="5">
    <location>
        <position position="722"/>
    </location>
</feature>
<feature type="modified residue" description="Phosphoserine" evidence="2">
    <location>
        <position position="552"/>
    </location>
</feature>
<feature type="modified residue" description="Phosphoserine; by AMPK" evidence="2">
    <location>
        <position position="554"/>
    </location>
</feature>
<feature type="modified residue" description="Phosphoserine" evidence="1">
    <location>
        <position position="595"/>
    </location>
</feature>
<feature type="modified residue" description="Phosphoserine" evidence="1">
    <location>
        <position position="627"/>
    </location>
</feature>
<feature type="modified residue" description="Phosphoserine" evidence="1">
    <location>
        <position position="649"/>
    </location>
</feature>
<sequence length="763" mass="83129">MDLRTMTQSLVTLAEDNMAFFSSQGPGETARRLSNVFAGVREQALGLEPALGSLLSVAHLFDLDPETPANGYRSLVHTARCCLAHLLHKSRYVASNRRSIFFRTSHNLAELEAYLAALTQLRALAYYAQRLLATNRPGGLFFEGDEGLTADFLREYVTLHKGCFYGRCLGFQFTPSIRPFLQTISIGLVSFGEHYKRNESGLGVTASSLFTSGRFAIDPELRGAEFERITQNLDVHFWKAFWNITEIEVLSSLANMASATVRVSRLISLPPEAFEMPLTSDPKLTVTISPPLAHTGPGPVLIRLISYDLREGQDSEELNSMVKSEGPRILELRPRPQQTSRSRSLVVXFHGGGFVAQTSKSHEPYLKSWAQELGAPIISIDYSLAPEAPFPRALEECFFAYCWAVKHCALLGSTGERICLAGDSAGGNLCFTVALRAAAYGVRVPDGIMAAYPATMLQSAASPSRLLSLMDPLLPLSVLSKCVSAYAGAETEEHPNSDEKALGMMGLVRRDTSLLLRDLRLGASSWLNSFLEFSGQKSQKTSAPTVESMRRSVSEAALAQPEGPVGTDSLKILTLKDLNLKSSSETSETPEMSLSVETLGPSTPSDVNFFLRPEDAREEAEAKEGLSAKDGSSRVSNAFPEGFHPRRTSQGATQMPLYSSPIVKNPFMSPLLAPDNMLKTLPPVHIVACALDPMLDDSXMFARRLRALGQPVTLRVVEDLPHGFLSLASLCRETRQAAELCVERIRLILTPPAAAAAAAPPPL</sequence>
<protein>
    <recommendedName>
        <fullName>Hormone-sensitive lipase</fullName>
        <shortName>HSL</shortName>
        <ecNumber evidence="1">3.1.1.79</ecNumber>
    </recommendedName>
    <alternativeName>
        <fullName>Monoacylglycerol lipase LIPE</fullName>
        <ecNumber evidence="3">3.1.1.23</ecNumber>
    </alternativeName>
    <alternativeName>
        <fullName evidence="3">Retinyl ester hydrolase</fullName>
        <shortName>REH</shortName>
    </alternativeName>
</protein>
<organism>
    <name type="scientific">Ictidomys tridecemlineatus</name>
    <name type="common">Thirteen-lined ground squirrel</name>
    <name type="synonym">Spermophilus tridecemlineatus</name>
    <dbReference type="NCBI Taxonomy" id="43179"/>
    <lineage>
        <taxon>Eukaryota</taxon>
        <taxon>Metazoa</taxon>
        <taxon>Chordata</taxon>
        <taxon>Craniata</taxon>
        <taxon>Vertebrata</taxon>
        <taxon>Euteleostomi</taxon>
        <taxon>Mammalia</taxon>
        <taxon>Eutheria</taxon>
        <taxon>Euarchontoglires</taxon>
        <taxon>Glires</taxon>
        <taxon>Rodentia</taxon>
        <taxon>Sciuromorpha</taxon>
        <taxon>Sciuridae</taxon>
        <taxon>Xerinae</taxon>
        <taxon>Marmotini</taxon>
        <taxon>Ictidomys</taxon>
    </lineage>
</organism>
<name>LIPS_ICTTR</name>
<gene>
    <name type="primary">LIPE</name>
</gene>
<comment type="function">
    <text evidence="1 3 4">Lipase with broad substrate specificity, catalyzing the hydrolysis of triacylglycerols (TAGs), diacylglycerols (DAGs), monoacylglycerols (MAGs), cholesteryl esters and retinyl esters (By similarity). Shows a preferential hydrolysis of DAGs over TAGs and MAGs (By similarity). Preferentially hydrolyzes fatty acid (FA) esters at the sn-3 position of the glycerol backbone in DAGs and FA esters at the sn-1 and sn-2 positions of the glycerol backbone in TAGs (By similarity). Catalyzes the hydrolysis of 2-arachidonoylglycerol, an endocannabinoid and of 2-acetyl monoalkylglycerol ether, the penultimate precursor of the pathway for de novo synthesis of platelet-activating factor (By similarity). In adipose tissue and heart, it primarily hydrolyzes stored triglycerides to free fatty acids, while in steroidogenic tissues, it principally converts cholesteryl esters to free cholesterol for steroid hormone production (By similarity).</text>
</comment>
<comment type="catalytic activity">
    <reaction evidence="1">
        <text>a diacylglycerol + H2O = a monoacylglycerol + a fatty acid + H(+)</text>
        <dbReference type="Rhea" id="RHEA:32731"/>
        <dbReference type="ChEBI" id="CHEBI:15377"/>
        <dbReference type="ChEBI" id="CHEBI:15378"/>
        <dbReference type="ChEBI" id="CHEBI:17408"/>
        <dbReference type="ChEBI" id="CHEBI:18035"/>
        <dbReference type="ChEBI" id="CHEBI:28868"/>
        <dbReference type="EC" id="3.1.1.79"/>
    </reaction>
</comment>
<comment type="catalytic activity">
    <reaction evidence="1">
        <text>a triacylglycerol + H2O = a diacylglycerol + a fatty acid + H(+)</text>
        <dbReference type="Rhea" id="RHEA:12044"/>
        <dbReference type="ChEBI" id="CHEBI:15377"/>
        <dbReference type="ChEBI" id="CHEBI:15378"/>
        <dbReference type="ChEBI" id="CHEBI:17855"/>
        <dbReference type="ChEBI" id="CHEBI:18035"/>
        <dbReference type="ChEBI" id="CHEBI:28868"/>
        <dbReference type="EC" id="3.1.1.79"/>
    </reaction>
</comment>
<comment type="catalytic activity">
    <reaction evidence="1">
        <text>a monoacylglycerol + H2O = glycerol + a fatty acid + H(+)</text>
        <dbReference type="Rhea" id="RHEA:15245"/>
        <dbReference type="ChEBI" id="CHEBI:15377"/>
        <dbReference type="ChEBI" id="CHEBI:15378"/>
        <dbReference type="ChEBI" id="CHEBI:17408"/>
        <dbReference type="ChEBI" id="CHEBI:17754"/>
        <dbReference type="ChEBI" id="CHEBI:28868"/>
        <dbReference type="EC" id="3.1.1.79"/>
    </reaction>
</comment>
<comment type="catalytic activity">
    <reaction evidence="1">
        <text>Hydrolyzes glycerol monoesters of long-chain fatty acids.</text>
        <dbReference type="EC" id="3.1.1.23"/>
    </reaction>
</comment>
<comment type="catalytic activity">
    <reaction evidence="4">
        <text>1,2-di-(9Z-octadecenoyl)-glycerol + (9Z)-octadecenoate + H(+) = 1,2,3-tri-(9Z-octadecenoyl)-glycerol + H2O</text>
        <dbReference type="Rhea" id="RHEA:38379"/>
        <dbReference type="ChEBI" id="CHEBI:15377"/>
        <dbReference type="ChEBI" id="CHEBI:15378"/>
        <dbReference type="ChEBI" id="CHEBI:30823"/>
        <dbReference type="ChEBI" id="CHEBI:52323"/>
        <dbReference type="ChEBI" id="CHEBI:53753"/>
    </reaction>
    <physiologicalReaction direction="right-to-left" evidence="4">
        <dbReference type="Rhea" id="RHEA:38381"/>
    </physiologicalReaction>
</comment>
<comment type="catalytic activity">
    <reaction evidence="4">
        <text>2,3-di-(9Z)-octadecenoyl-sn-glycerol + H2O = 2-(9Z-octadecenoyl)-glycerol + (9Z)-octadecenoate + H(+)</text>
        <dbReference type="Rhea" id="RHEA:38383"/>
        <dbReference type="ChEBI" id="CHEBI:15377"/>
        <dbReference type="ChEBI" id="CHEBI:15378"/>
        <dbReference type="ChEBI" id="CHEBI:30823"/>
        <dbReference type="ChEBI" id="CHEBI:73990"/>
        <dbReference type="ChEBI" id="CHEBI:75824"/>
    </reaction>
    <physiologicalReaction direction="left-to-right" evidence="4">
        <dbReference type="Rhea" id="RHEA:38384"/>
    </physiologicalReaction>
</comment>
<comment type="catalytic activity">
    <reaction evidence="4">
        <text>cholesteryl (9Z-octadecenoate) + H2O = cholesterol + (9Z)-octadecenoate + H(+)</text>
        <dbReference type="Rhea" id="RHEA:33875"/>
        <dbReference type="ChEBI" id="CHEBI:15377"/>
        <dbReference type="ChEBI" id="CHEBI:15378"/>
        <dbReference type="ChEBI" id="CHEBI:16113"/>
        <dbReference type="ChEBI" id="CHEBI:30823"/>
        <dbReference type="ChEBI" id="CHEBI:46898"/>
    </reaction>
    <physiologicalReaction direction="left-to-right" evidence="4">
        <dbReference type="Rhea" id="RHEA:33876"/>
    </physiologicalReaction>
</comment>
<comment type="catalytic activity">
    <reaction evidence="4">
        <text>1,2,3-tri-(9Z-octadecenoyl)-glycerol + H2O = di-(9Z)-octadecenoylglycerol + (9Z)-octadecenoate + H(+)</text>
        <dbReference type="Rhea" id="RHEA:38575"/>
        <dbReference type="ChEBI" id="CHEBI:15377"/>
        <dbReference type="ChEBI" id="CHEBI:15378"/>
        <dbReference type="ChEBI" id="CHEBI:30823"/>
        <dbReference type="ChEBI" id="CHEBI:53753"/>
        <dbReference type="ChEBI" id="CHEBI:75945"/>
    </reaction>
    <physiologicalReaction direction="left-to-right" evidence="4">
        <dbReference type="Rhea" id="RHEA:38576"/>
    </physiologicalReaction>
</comment>
<comment type="catalytic activity">
    <reaction evidence="3">
        <text>all-trans-retinyl hexadecanoate + H2O = all-trans-retinol + hexadecanoate + H(+)</text>
        <dbReference type="Rhea" id="RHEA:13933"/>
        <dbReference type="ChEBI" id="CHEBI:7896"/>
        <dbReference type="ChEBI" id="CHEBI:15377"/>
        <dbReference type="ChEBI" id="CHEBI:15378"/>
        <dbReference type="ChEBI" id="CHEBI:17336"/>
        <dbReference type="ChEBI" id="CHEBI:17616"/>
    </reaction>
    <physiologicalReaction direction="left-to-right" evidence="3">
        <dbReference type="Rhea" id="RHEA:13934"/>
    </physiologicalReaction>
</comment>
<comment type="catalytic activity">
    <reaction evidence="3">
        <text>1,2-di-(9Z-octadecenoyl)-glycerol + H2O = (9Z-octadecenoyl)-glycerol + (9Z)-octadecenoate + H(+)</text>
        <dbReference type="Rhea" id="RHEA:38455"/>
        <dbReference type="ChEBI" id="CHEBI:15377"/>
        <dbReference type="ChEBI" id="CHEBI:15378"/>
        <dbReference type="ChEBI" id="CHEBI:30823"/>
        <dbReference type="ChEBI" id="CHEBI:52323"/>
        <dbReference type="ChEBI" id="CHEBI:75937"/>
    </reaction>
    <physiologicalReaction direction="left-to-right" evidence="3">
        <dbReference type="Rhea" id="RHEA:38456"/>
    </physiologicalReaction>
</comment>
<comment type="catalytic activity">
    <reaction evidence="3">
        <text>2-(5Z,8Z,11Z,14Z-eicosatetraenoyl)-glycerol + H2O = glycerol + (5Z,8Z,11Z,14Z)-eicosatetraenoate + H(+)</text>
        <dbReference type="Rhea" id="RHEA:26132"/>
        <dbReference type="ChEBI" id="CHEBI:15377"/>
        <dbReference type="ChEBI" id="CHEBI:15378"/>
        <dbReference type="ChEBI" id="CHEBI:17754"/>
        <dbReference type="ChEBI" id="CHEBI:32395"/>
        <dbReference type="ChEBI" id="CHEBI:52392"/>
    </reaction>
    <physiologicalReaction direction="left-to-right" evidence="3">
        <dbReference type="Rhea" id="RHEA:26133"/>
    </physiologicalReaction>
</comment>
<comment type="catalytic activity">
    <reaction evidence="3">
        <text>1-(9Z-octadecenoyl)-glycerol + H2O = glycerol + (9Z)-octadecenoate + H(+)</text>
        <dbReference type="Rhea" id="RHEA:38487"/>
        <dbReference type="ChEBI" id="CHEBI:15377"/>
        <dbReference type="ChEBI" id="CHEBI:15378"/>
        <dbReference type="ChEBI" id="CHEBI:17754"/>
        <dbReference type="ChEBI" id="CHEBI:30823"/>
        <dbReference type="ChEBI" id="CHEBI:75342"/>
    </reaction>
    <physiologicalReaction direction="left-to-right" evidence="3">
        <dbReference type="Rhea" id="RHEA:38488"/>
    </physiologicalReaction>
</comment>
<comment type="catalytic activity">
    <reaction evidence="3">
        <text>2-(9Z-octadecenoyl)-glycerol + H2O = glycerol + (9Z)-octadecenoate + H(+)</text>
        <dbReference type="Rhea" id="RHEA:38491"/>
        <dbReference type="ChEBI" id="CHEBI:15377"/>
        <dbReference type="ChEBI" id="CHEBI:15378"/>
        <dbReference type="ChEBI" id="CHEBI:17754"/>
        <dbReference type="ChEBI" id="CHEBI:30823"/>
        <dbReference type="ChEBI" id="CHEBI:73990"/>
    </reaction>
    <physiologicalReaction direction="left-to-right" evidence="3">
        <dbReference type="Rhea" id="RHEA:38492"/>
    </physiologicalReaction>
</comment>
<comment type="catalytic activity">
    <reaction evidence="3">
        <text>1-O-hexadecyl-2-acetyl-sn-glycerol + H2O = 1-O-hexadecyl-sn-glycerol + acetate + H(+)</text>
        <dbReference type="Rhea" id="RHEA:38563"/>
        <dbReference type="ChEBI" id="CHEBI:15377"/>
        <dbReference type="ChEBI" id="CHEBI:15378"/>
        <dbReference type="ChEBI" id="CHEBI:30089"/>
        <dbReference type="ChEBI" id="CHEBI:34115"/>
        <dbReference type="ChEBI" id="CHEBI:75936"/>
    </reaction>
    <physiologicalReaction direction="left-to-right" evidence="3">
        <dbReference type="Rhea" id="RHEA:38564"/>
    </physiologicalReaction>
</comment>
<comment type="catalytic activity">
    <reaction evidence="3">
        <text>1,2-di-(9Z-octadecenoyl)-sn-glycerol + H2O = (9Z-octadecenoyl)-glycerol + (9Z)-octadecenoate + H(+)</text>
        <dbReference type="Rhea" id="RHEA:39935"/>
        <dbReference type="ChEBI" id="CHEBI:15377"/>
        <dbReference type="ChEBI" id="CHEBI:15378"/>
        <dbReference type="ChEBI" id="CHEBI:30823"/>
        <dbReference type="ChEBI" id="CHEBI:52333"/>
        <dbReference type="ChEBI" id="CHEBI:75937"/>
    </reaction>
    <physiologicalReaction direction="left-to-right" evidence="3">
        <dbReference type="Rhea" id="RHEA:39936"/>
    </physiologicalReaction>
</comment>
<comment type="catalytic activity">
    <reaction evidence="3">
        <text>1,3-di-(9Z-octadecenoyl)-glycerol + H2O = 1-(9Z-octadecenoyl)-glycerol + (9Z)-octadecenoate + H(+)</text>
        <dbReference type="Rhea" id="RHEA:39939"/>
        <dbReference type="ChEBI" id="CHEBI:15377"/>
        <dbReference type="ChEBI" id="CHEBI:15378"/>
        <dbReference type="ChEBI" id="CHEBI:30823"/>
        <dbReference type="ChEBI" id="CHEBI:75342"/>
        <dbReference type="ChEBI" id="CHEBI:75735"/>
    </reaction>
    <physiologicalReaction direction="left-to-right" evidence="3">
        <dbReference type="Rhea" id="RHEA:39940"/>
    </physiologicalReaction>
</comment>
<comment type="catalytic activity">
    <reaction evidence="1">
        <text>1,2-di-(9Z-octadecenoyl)-glycerol + H2O = 2-(9Z-octadecenoyl)-glycerol + (9Z)-octadecenoate + H(+)</text>
        <dbReference type="Rhea" id="RHEA:38659"/>
        <dbReference type="ChEBI" id="CHEBI:15377"/>
        <dbReference type="ChEBI" id="CHEBI:15378"/>
        <dbReference type="ChEBI" id="CHEBI:30823"/>
        <dbReference type="ChEBI" id="CHEBI:52323"/>
        <dbReference type="ChEBI" id="CHEBI:73990"/>
    </reaction>
    <physiologicalReaction direction="left-to-right" evidence="1">
        <dbReference type="Rhea" id="RHEA:38660"/>
    </physiologicalReaction>
</comment>
<comment type="pathway">
    <text>Glycerolipid metabolism; triacylglycerol degradation.</text>
</comment>
<comment type="subunit">
    <text evidence="1 3 4">Monomer and homodimer (By similarity). Interacts with CAVIN1 in the adipocyte cytoplasm (By similarity). Interacts with PLIN5 (By similarity).</text>
</comment>
<comment type="subcellular location">
    <subcellularLocation>
        <location evidence="4">Cell membrane</location>
    </subcellularLocation>
    <subcellularLocation>
        <location evidence="4">Membrane</location>
        <location evidence="4">Caveola</location>
    </subcellularLocation>
    <subcellularLocation>
        <location evidence="4">Cytoplasm</location>
        <location evidence="4">Cytosol</location>
    </subcellularLocation>
    <subcellularLocation>
        <location evidence="3">Lipid droplet</location>
    </subcellularLocation>
    <text evidence="3 4">Found in the high-density caveolae. Translocates to the cytoplasm from the caveolae upon insulin stimulation. Phosphorylation by AMPK reduces its translocation towards the lipid droplets.</text>
</comment>
<comment type="PTM">
    <text evidence="3">Phosphorylation by AMPK reduces its translocation towards the lipid droplets.</text>
</comment>
<comment type="similarity">
    <text evidence="8">Belongs to the 'GDXG' lipolytic enzyme family.</text>
</comment>
<accession>Q9R101</accession>